<accession>P30258</accession>
<name>PRTZ3_SCYCA</name>
<dbReference type="PIR" id="S29829">
    <property type="entry name" value="S29829"/>
</dbReference>
<dbReference type="GO" id="GO:0000786">
    <property type="term" value="C:nucleosome"/>
    <property type="evidence" value="ECO:0007669"/>
    <property type="project" value="UniProtKB-KW"/>
</dbReference>
<dbReference type="GO" id="GO:0005634">
    <property type="term" value="C:nucleus"/>
    <property type="evidence" value="ECO:0007669"/>
    <property type="project" value="UniProtKB-SubCell"/>
</dbReference>
<dbReference type="GO" id="GO:0003677">
    <property type="term" value="F:DNA binding"/>
    <property type="evidence" value="ECO:0007669"/>
    <property type="project" value="UniProtKB-KW"/>
</dbReference>
<dbReference type="GO" id="GO:0030154">
    <property type="term" value="P:cell differentiation"/>
    <property type="evidence" value="ECO:0007669"/>
    <property type="project" value="UniProtKB-KW"/>
</dbReference>
<dbReference type="GO" id="GO:0030261">
    <property type="term" value="P:chromosome condensation"/>
    <property type="evidence" value="ECO:0007669"/>
    <property type="project" value="UniProtKB-KW"/>
</dbReference>
<dbReference type="GO" id="GO:0007283">
    <property type="term" value="P:spermatogenesis"/>
    <property type="evidence" value="ECO:0007669"/>
    <property type="project" value="UniProtKB-KW"/>
</dbReference>
<comment type="function">
    <text>Protamines substitute for histones in the chromatin of sperm during the haploid phase of spermatogenesis. They compact sperm DNA into a highly condensed, stable and inactive complex.</text>
</comment>
<comment type="subcellular location">
    <subcellularLocation>
        <location>Nucleus</location>
    </subcellularLocation>
    <subcellularLocation>
        <location>Chromosome</location>
    </subcellularLocation>
</comment>
<comment type="tissue specificity">
    <text>Testis.</text>
</comment>
<reference key="1">
    <citation type="journal article" date="1981" name="Eur. J. Biochem.">
        <title>Primary structure of the protamine isolated from the sperm nuclei of the dog-fish Scylliorhinus caniculus.</title>
        <authorList>
            <person name="Sautiere P."/>
            <person name="Briand G."/>
            <person name="Gusse M."/>
            <person name="Chevaillier P."/>
        </authorList>
    </citation>
    <scope>PROTEIN SEQUENCE</scope>
    <source>
        <tissue>Testis</tissue>
    </source>
</reference>
<reference key="2">
    <citation type="journal article" date="1993" name="Biochim. Biophys. Acta">
        <title>A corrected primary structure for dog-fish Scylliorhinus caniculus protamine Z3.</title>
        <authorList>
            <person name="Kouach M."/>
            <person name="Jaquinod M."/>
            <person name="Belaiche D."/>
            <person name="Sautiere P."/>
            <person name="van Dorsselaer A."/>
            <person name="Chevaillier P."/>
            <person name="Briand G."/>
        </authorList>
    </citation>
    <scope>SEQUENCE REVISION</scope>
</reference>
<reference key="3">
    <citation type="journal article" date="1983" name="Biochim. Biophys. Acta">
        <title>Extraction, purification and characterization of the sperm protamines of the dog-fish Scylliorhinus caniculus.</title>
        <authorList>
            <person name="Gusse M."/>
            <person name="Sautiere P."/>
            <person name="Chauviere M."/>
            <person name="Chevaillier P."/>
        </authorList>
    </citation>
    <scope>PROTEIN SEQUENCE OF 1-5</scope>
</reference>
<feature type="peptide" id="PRO_0000044850" description="Protamine Z3">
    <location>
        <begin position="1"/>
        <end position="37"/>
    </location>
</feature>
<feature type="region of interest" description="Disordered" evidence="1">
    <location>
        <begin position="1"/>
        <end position="37"/>
    </location>
</feature>
<proteinExistence type="evidence at protein level"/>
<keyword id="KW-0158">Chromosome</keyword>
<keyword id="KW-0217">Developmental protein</keyword>
<keyword id="KW-0221">Differentiation</keyword>
<keyword id="KW-0903">Direct protein sequencing</keyword>
<keyword id="KW-0226">DNA condensation</keyword>
<keyword id="KW-0238">DNA-binding</keyword>
<keyword id="KW-0544">Nucleosome core</keyword>
<keyword id="KW-0539">Nucleus</keyword>
<keyword id="KW-0744">Spermatogenesis</keyword>
<organism>
    <name type="scientific">Scyliorhinus canicula</name>
    <name type="common">Small-spotted catshark</name>
    <name type="synonym">Squalus canicula</name>
    <dbReference type="NCBI Taxonomy" id="7830"/>
    <lineage>
        <taxon>Eukaryota</taxon>
        <taxon>Metazoa</taxon>
        <taxon>Chordata</taxon>
        <taxon>Craniata</taxon>
        <taxon>Vertebrata</taxon>
        <taxon>Chondrichthyes</taxon>
        <taxon>Elasmobranchii</taxon>
        <taxon>Galeomorphii</taxon>
        <taxon>Galeoidea</taxon>
        <taxon>Carcharhiniformes</taxon>
        <taxon>Scyliorhinidae</taxon>
        <taxon>Scyliorhinus</taxon>
    </lineage>
</organism>
<protein>
    <recommendedName>
        <fullName>Protamine Z3</fullName>
    </recommendedName>
    <alternativeName>
        <fullName>Scylliorhinine Z3</fullName>
    </alternativeName>
</protein>
<evidence type="ECO:0000256" key="1">
    <source>
        <dbReference type="SAM" id="MobiDB-lite"/>
    </source>
</evidence>
<sequence length="37" mass="4748">ARSRSRRSYGRGRRRGGRRRRRRRRRRRGGRRGRRSR</sequence>